<keyword id="KW-0068">Autocatalytic cleavage</keyword>
<keyword id="KW-0963">Cytoplasm</keyword>
<keyword id="KW-0378">Hydrolase</keyword>
<keyword id="KW-0645">Protease</keyword>
<keyword id="KW-0647">Proteasome</keyword>
<keyword id="KW-1185">Reference proteome</keyword>
<keyword id="KW-0888">Threonine protease</keyword>
<keyword id="KW-0865">Zymogen</keyword>
<dbReference type="EC" id="3.4.25.1" evidence="1"/>
<dbReference type="EMBL" id="CP001365">
    <property type="protein sequence ID" value="ACM56210.1"/>
    <property type="molecule type" value="Genomic_DNA"/>
</dbReference>
<dbReference type="RefSeq" id="WP_012659843.1">
    <property type="nucleotide sequence ID" value="NC_012029.1"/>
</dbReference>
<dbReference type="SMR" id="B9LTS6"/>
<dbReference type="MEROPS" id="T01.002"/>
<dbReference type="GeneID" id="7401744"/>
<dbReference type="KEGG" id="hla:Hlac_0608"/>
<dbReference type="eggNOG" id="arCOG00970">
    <property type="taxonomic scope" value="Archaea"/>
</dbReference>
<dbReference type="HOGENOM" id="CLU_035750_7_2_2"/>
<dbReference type="Proteomes" id="UP000000740">
    <property type="component" value="Chromosome 1"/>
</dbReference>
<dbReference type="GO" id="GO:0005737">
    <property type="term" value="C:cytoplasm"/>
    <property type="evidence" value="ECO:0007669"/>
    <property type="project" value="UniProtKB-SubCell"/>
</dbReference>
<dbReference type="GO" id="GO:0019774">
    <property type="term" value="C:proteasome core complex, beta-subunit complex"/>
    <property type="evidence" value="ECO:0007669"/>
    <property type="project" value="UniProtKB-UniRule"/>
</dbReference>
<dbReference type="GO" id="GO:0004298">
    <property type="term" value="F:threonine-type endopeptidase activity"/>
    <property type="evidence" value="ECO:0007669"/>
    <property type="project" value="UniProtKB-UniRule"/>
</dbReference>
<dbReference type="GO" id="GO:0010498">
    <property type="term" value="P:proteasomal protein catabolic process"/>
    <property type="evidence" value="ECO:0007669"/>
    <property type="project" value="UniProtKB-UniRule"/>
</dbReference>
<dbReference type="FunFam" id="3.60.20.10:FF:000049">
    <property type="entry name" value="Proteasome subunit beta"/>
    <property type="match status" value="1"/>
</dbReference>
<dbReference type="Gene3D" id="3.60.20.10">
    <property type="entry name" value="Glutamine Phosphoribosylpyrophosphate, subunit 1, domain 1"/>
    <property type="match status" value="1"/>
</dbReference>
<dbReference type="HAMAP" id="MF_02113_A">
    <property type="entry name" value="Proteasome_B_A"/>
    <property type="match status" value="1"/>
</dbReference>
<dbReference type="InterPro" id="IPR029055">
    <property type="entry name" value="Ntn_hydrolases_N"/>
</dbReference>
<dbReference type="InterPro" id="IPR019983">
    <property type="entry name" value="Pept_T1A_Psome_bsu_arc"/>
</dbReference>
<dbReference type="InterPro" id="IPR000243">
    <property type="entry name" value="Pept_T1A_subB"/>
</dbReference>
<dbReference type="InterPro" id="IPR001353">
    <property type="entry name" value="Proteasome_sua/b"/>
</dbReference>
<dbReference type="InterPro" id="IPR023333">
    <property type="entry name" value="Proteasome_suB-type"/>
</dbReference>
<dbReference type="NCBIfam" id="TIGR03634">
    <property type="entry name" value="arc_protsome_B"/>
    <property type="match status" value="1"/>
</dbReference>
<dbReference type="PANTHER" id="PTHR32194:SF0">
    <property type="entry name" value="ATP-DEPENDENT PROTEASE SUBUNIT HSLV"/>
    <property type="match status" value="1"/>
</dbReference>
<dbReference type="PANTHER" id="PTHR32194">
    <property type="entry name" value="METALLOPROTEASE TLDD"/>
    <property type="match status" value="1"/>
</dbReference>
<dbReference type="Pfam" id="PF00227">
    <property type="entry name" value="Proteasome"/>
    <property type="match status" value="1"/>
</dbReference>
<dbReference type="PRINTS" id="PR00141">
    <property type="entry name" value="PROTEASOME"/>
</dbReference>
<dbReference type="SUPFAM" id="SSF56235">
    <property type="entry name" value="N-terminal nucleophile aminohydrolases (Ntn hydrolases)"/>
    <property type="match status" value="1"/>
</dbReference>
<dbReference type="PROSITE" id="PS51476">
    <property type="entry name" value="PROTEASOME_BETA_2"/>
    <property type="match status" value="1"/>
</dbReference>
<gene>
    <name evidence="1" type="primary">psmB</name>
    <name type="ordered locus">Hlac_0608</name>
</gene>
<protein>
    <recommendedName>
        <fullName evidence="1">Proteasome subunit beta</fullName>
        <ecNumber evidence="1">3.4.25.1</ecNumber>
    </recommendedName>
    <alternativeName>
        <fullName evidence="1">20S proteasome beta subunit</fullName>
    </alternativeName>
    <alternativeName>
        <fullName evidence="1">Proteasome core protein PsmB</fullName>
    </alternativeName>
</protein>
<organism>
    <name type="scientific">Halorubrum lacusprofundi (strain ATCC 49239 / DSM 5036 / JCM 8891 / ACAM 34)</name>
    <dbReference type="NCBI Taxonomy" id="416348"/>
    <lineage>
        <taxon>Archaea</taxon>
        <taxon>Methanobacteriati</taxon>
        <taxon>Methanobacteriota</taxon>
        <taxon>Stenosarchaea group</taxon>
        <taxon>Halobacteria</taxon>
        <taxon>Halobacteriales</taxon>
        <taxon>Haloferacaceae</taxon>
        <taxon>Halorubrum</taxon>
    </lineage>
</organism>
<evidence type="ECO:0000255" key="1">
    <source>
        <dbReference type="HAMAP-Rule" id="MF_02113"/>
    </source>
</evidence>
<evidence type="ECO:0000256" key="2">
    <source>
        <dbReference type="SAM" id="MobiDB-lite"/>
    </source>
</evidence>
<comment type="function">
    <text evidence="1">Component of the proteasome core, a large protease complex with broad specificity involved in protein degradation.</text>
</comment>
<comment type="catalytic activity">
    <reaction evidence="1">
        <text>Cleavage of peptide bonds with very broad specificity.</text>
        <dbReference type="EC" id="3.4.25.1"/>
    </reaction>
</comment>
<comment type="activity regulation">
    <text evidence="1">The formation of the proteasomal ATPase PAN-20S proteasome complex, via the docking of the C-termini of PAN into the intersubunit pockets in the alpha-rings, triggers opening of the gate for substrate entry. Interconversion between the open-gate and close-gate conformations leads to a dynamic regulation of the 20S proteasome proteolysis activity.</text>
</comment>
<comment type="subunit">
    <text evidence="1">The 20S proteasome core is composed of 14 alpha and 14 beta subunits that assemble into four stacked heptameric rings, resulting in a barrel-shaped structure. The two inner rings, each composed of seven catalytic beta subunits, are sandwiched by two outer rings, each composed of seven alpha subunits. The catalytic chamber with the active sites is on the inside of the barrel. Has a gated structure, the ends of the cylinder being occluded by the N-termini of the alpha-subunits. Is capped at one or both ends by the proteasome regulatory ATPase, PAN.</text>
</comment>
<comment type="subcellular location">
    <subcellularLocation>
        <location evidence="1">Cytoplasm</location>
    </subcellularLocation>
</comment>
<comment type="similarity">
    <text evidence="1">Belongs to the peptidase T1B family.</text>
</comment>
<name>PSB_HALLT</name>
<accession>B9LTS6</accession>
<feature type="propeptide" id="PRO_0000397308" description="Removed in mature form; by autocatalysis" evidence="1">
    <location>
        <begin position="1"/>
        <end position="49"/>
    </location>
</feature>
<feature type="chain" id="PRO_0000397309" description="Proteasome subunit beta">
    <location>
        <begin position="50"/>
        <end position="243"/>
    </location>
</feature>
<feature type="region of interest" description="Disordered" evidence="2">
    <location>
        <begin position="1"/>
        <end position="50"/>
    </location>
</feature>
<feature type="compositionally biased region" description="Basic and acidic residues" evidence="2">
    <location>
        <begin position="29"/>
        <end position="38"/>
    </location>
</feature>
<feature type="active site" description="Nucleophile" evidence="1">
    <location>
        <position position="50"/>
    </location>
</feature>
<reference key="1">
    <citation type="journal article" date="2016" name="Stand. Genomic Sci.">
        <title>Complete genome sequence of the Antarctic Halorubrum lacusprofundi type strain ACAM 34.</title>
        <authorList>
            <person name="Anderson I.J."/>
            <person name="DasSarma P."/>
            <person name="Lucas S."/>
            <person name="Copeland A."/>
            <person name="Lapidus A."/>
            <person name="Del Rio T.G."/>
            <person name="Tice H."/>
            <person name="Dalin E."/>
            <person name="Bruce D.C."/>
            <person name="Goodwin L."/>
            <person name="Pitluck S."/>
            <person name="Sims D."/>
            <person name="Brettin T.S."/>
            <person name="Detter J.C."/>
            <person name="Han C.S."/>
            <person name="Larimer F."/>
            <person name="Hauser L."/>
            <person name="Land M."/>
            <person name="Ivanova N."/>
            <person name="Richardson P."/>
            <person name="Cavicchioli R."/>
            <person name="DasSarma S."/>
            <person name="Woese C.R."/>
            <person name="Kyrpides N.C."/>
        </authorList>
    </citation>
    <scope>NUCLEOTIDE SEQUENCE [LARGE SCALE GENOMIC DNA]</scope>
    <source>
        <strain>ATCC 49239 / DSM 5036 / JCM 8891 / ACAM 34</strain>
    </source>
</reference>
<sequence>MRTPTGDLSDGPAEELGRDQPVFGPEIGEFEHSERRAAQADGEGEMKTGTTTVGIKTADGVVMATDMRASLGGMVSSKDVQKVEEVHPRGALTIAGSVSAAQNLISTLKAETSLYETRRGKDMSMEALSTLTGNLLRSGAFYIVQPILGGVDDEGSHIYSIDALGGTTEEEYTVTGSGSQYALGVLEQEYDDDVTVDEAKTMAAKAIQSAVERDLASGNGINVAVVTDDGVDITRYKDFDDLL</sequence>
<proteinExistence type="inferred from homology"/>